<name>RLME_RHOPT</name>
<organism>
    <name type="scientific">Rhodopseudomonas palustris (strain TIE-1)</name>
    <dbReference type="NCBI Taxonomy" id="395960"/>
    <lineage>
        <taxon>Bacteria</taxon>
        <taxon>Pseudomonadati</taxon>
        <taxon>Pseudomonadota</taxon>
        <taxon>Alphaproteobacteria</taxon>
        <taxon>Hyphomicrobiales</taxon>
        <taxon>Nitrobacteraceae</taxon>
        <taxon>Rhodopseudomonas</taxon>
    </lineage>
</organism>
<accession>B3QFD2</accession>
<feature type="chain" id="PRO_1000195011" description="Ribosomal RNA large subunit methyltransferase E">
    <location>
        <begin position="1"/>
        <end position="237"/>
    </location>
</feature>
<feature type="active site" description="Proton acceptor" evidence="1">
    <location>
        <position position="179"/>
    </location>
</feature>
<feature type="binding site" evidence="1">
    <location>
        <position position="76"/>
    </location>
    <ligand>
        <name>S-adenosyl-L-methionine</name>
        <dbReference type="ChEBI" id="CHEBI:59789"/>
    </ligand>
</feature>
<feature type="binding site" evidence="1">
    <location>
        <position position="78"/>
    </location>
    <ligand>
        <name>S-adenosyl-L-methionine</name>
        <dbReference type="ChEBI" id="CHEBI:59789"/>
    </ligand>
</feature>
<feature type="binding site" evidence="1">
    <location>
        <position position="99"/>
    </location>
    <ligand>
        <name>S-adenosyl-L-methionine</name>
        <dbReference type="ChEBI" id="CHEBI:59789"/>
    </ligand>
</feature>
<feature type="binding site" evidence="1">
    <location>
        <position position="115"/>
    </location>
    <ligand>
        <name>S-adenosyl-L-methionine</name>
        <dbReference type="ChEBI" id="CHEBI:59789"/>
    </ligand>
</feature>
<feature type="binding site" evidence="1">
    <location>
        <position position="139"/>
    </location>
    <ligand>
        <name>S-adenosyl-L-methionine</name>
        <dbReference type="ChEBI" id="CHEBI:59789"/>
    </ligand>
</feature>
<evidence type="ECO:0000255" key="1">
    <source>
        <dbReference type="HAMAP-Rule" id="MF_01547"/>
    </source>
</evidence>
<sequence>MAKDTTGRMRVTVKSGGRMKLSSKLWLERQLNDPYVAQAKRDGYRSRAAYKLTEIDDKFRLLKSGMAVVDLGAAPGGWSQVAAKKVGAADGRGKVVAIDLLEMGEVPGVTFAQLDFLDPSAPERLREMLGGGADIVMSDMAANTTGHRKTDQLRIVGLVETAAMFASEVLKPGGTFLAKVFQSGADASLMTELKRDYASVKHVKPAASRKDSSERYLLATGFRGGAARDAEAAAEAE</sequence>
<dbReference type="EC" id="2.1.1.166" evidence="1"/>
<dbReference type="EMBL" id="CP001096">
    <property type="protein sequence ID" value="ACF01005.1"/>
    <property type="molecule type" value="Genomic_DNA"/>
</dbReference>
<dbReference type="RefSeq" id="WP_012495746.1">
    <property type="nucleotide sequence ID" value="NC_011004.1"/>
</dbReference>
<dbReference type="SMR" id="B3QFD2"/>
<dbReference type="KEGG" id="rpt:Rpal_2491"/>
<dbReference type="HOGENOM" id="CLU_009422_4_0_5"/>
<dbReference type="OrthoDB" id="9790080at2"/>
<dbReference type="Proteomes" id="UP000001725">
    <property type="component" value="Chromosome"/>
</dbReference>
<dbReference type="GO" id="GO:0005737">
    <property type="term" value="C:cytoplasm"/>
    <property type="evidence" value="ECO:0007669"/>
    <property type="project" value="UniProtKB-SubCell"/>
</dbReference>
<dbReference type="GO" id="GO:0008650">
    <property type="term" value="F:rRNA (uridine-2'-O-)-methyltransferase activity"/>
    <property type="evidence" value="ECO:0007669"/>
    <property type="project" value="UniProtKB-UniRule"/>
</dbReference>
<dbReference type="FunFam" id="3.40.50.150:FF:000005">
    <property type="entry name" value="Ribosomal RNA large subunit methyltransferase E"/>
    <property type="match status" value="1"/>
</dbReference>
<dbReference type="Gene3D" id="3.40.50.150">
    <property type="entry name" value="Vaccinia Virus protein VP39"/>
    <property type="match status" value="1"/>
</dbReference>
<dbReference type="HAMAP" id="MF_01547">
    <property type="entry name" value="RNA_methyltr_E"/>
    <property type="match status" value="1"/>
</dbReference>
<dbReference type="InterPro" id="IPR050082">
    <property type="entry name" value="RNA_methyltr_RlmE"/>
</dbReference>
<dbReference type="InterPro" id="IPR002877">
    <property type="entry name" value="RNA_MeTrfase_FtsJ_dom"/>
</dbReference>
<dbReference type="InterPro" id="IPR015507">
    <property type="entry name" value="rRNA-MeTfrase_E"/>
</dbReference>
<dbReference type="InterPro" id="IPR029063">
    <property type="entry name" value="SAM-dependent_MTases_sf"/>
</dbReference>
<dbReference type="PANTHER" id="PTHR10920">
    <property type="entry name" value="RIBOSOMAL RNA METHYLTRANSFERASE"/>
    <property type="match status" value="1"/>
</dbReference>
<dbReference type="PANTHER" id="PTHR10920:SF18">
    <property type="entry name" value="RRNA METHYLTRANSFERASE 2, MITOCHONDRIAL"/>
    <property type="match status" value="1"/>
</dbReference>
<dbReference type="Pfam" id="PF01728">
    <property type="entry name" value="FtsJ"/>
    <property type="match status" value="1"/>
</dbReference>
<dbReference type="PIRSF" id="PIRSF005461">
    <property type="entry name" value="23S_rRNA_mtase"/>
    <property type="match status" value="1"/>
</dbReference>
<dbReference type="SUPFAM" id="SSF53335">
    <property type="entry name" value="S-adenosyl-L-methionine-dependent methyltransferases"/>
    <property type="match status" value="1"/>
</dbReference>
<comment type="function">
    <text evidence="1">Specifically methylates the uridine in position 2552 of 23S rRNA at the 2'-O position of the ribose in the fully assembled 50S ribosomal subunit.</text>
</comment>
<comment type="catalytic activity">
    <reaction evidence="1">
        <text>uridine(2552) in 23S rRNA + S-adenosyl-L-methionine = 2'-O-methyluridine(2552) in 23S rRNA + S-adenosyl-L-homocysteine + H(+)</text>
        <dbReference type="Rhea" id="RHEA:42720"/>
        <dbReference type="Rhea" id="RHEA-COMP:10202"/>
        <dbReference type="Rhea" id="RHEA-COMP:10203"/>
        <dbReference type="ChEBI" id="CHEBI:15378"/>
        <dbReference type="ChEBI" id="CHEBI:57856"/>
        <dbReference type="ChEBI" id="CHEBI:59789"/>
        <dbReference type="ChEBI" id="CHEBI:65315"/>
        <dbReference type="ChEBI" id="CHEBI:74478"/>
        <dbReference type="EC" id="2.1.1.166"/>
    </reaction>
</comment>
<comment type="subcellular location">
    <subcellularLocation>
        <location evidence="1">Cytoplasm</location>
    </subcellularLocation>
</comment>
<comment type="similarity">
    <text evidence="1">Belongs to the class I-like SAM-binding methyltransferase superfamily. RNA methyltransferase RlmE family.</text>
</comment>
<proteinExistence type="inferred from homology"/>
<gene>
    <name evidence="1" type="primary">rlmE</name>
    <name evidence="1" type="synonym">ftsJ</name>
    <name evidence="1" type="synonym">rrmJ</name>
    <name type="ordered locus">Rpal_2491</name>
</gene>
<protein>
    <recommendedName>
        <fullName evidence="1">Ribosomal RNA large subunit methyltransferase E</fullName>
        <ecNumber evidence="1">2.1.1.166</ecNumber>
    </recommendedName>
    <alternativeName>
        <fullName evidence="1">23S rRNA Um2552 methyltransferase</fullName>
    </alternativeName>
    <alternativeName>
        <fullName evidence="1">rRNA (uridine-2'-O-)-methyltransferase</fullName>
    </alternativeName>
</protein>
<keyword id="KW-0963">Cytoplasm</keyword>
<keyword id="KW-0489">Methyltransferase</keyword>
<keyword id="KW-0698">rRNA processing</keyword>
<keyword id="KW-0949">S-adenosyl-L-methionine</keyword>
<keyword id="KW-0808">Transferase</keyword>
<reference key="1">
    <citation type="submission" date="2008-05" db="EMBL/GenBank/DDBJ databases">
        <title>Complete sequence of Rhodopseudomonas palustris TIE-1.</title>
        <authorList>
            <consortium name="US DOE Joint Genome Institute"/>
            <person name="Lucas S."/>
            <person name="Copeland A."/>
            <person name="Lapidus A."/>
            <person name="Glavina del Rio T."/>
            <person name="Dalin E."/>
            <person name="Tice H."/>
            <person name="Pitluck S."/>
            <person name="Chain P."/>
            <person name="Malfatti S."/>
            <person name="Shin M."/>
            <person name="Vergez L."/>
            <person name="Lang D."/>
            <person name="Schmutz J."/>
            <person name="Larimer F."/>
            <person name="Land M."/>
            <person name="Hauser L."/>
            <person name="Kyrpides N."/>
            <person name="Mikhailova N."/>
            <person name="Emerson D."/>
            <person name="Newman D.K."/>
            <person name="Roden E."/>
            <person name="Richardson P."/>
        </authorList>
    </citation>
    <scope>NUCLEOTIDE SEQUENCE [LARGE SCALE GENOMIC DNA]</scope>
    <source>
        <strain>TIE-1</strain>
    </source>
</reference>